<gene>
    <name type="primary">EDEM1</name>
    <name type="synonym">EDEM</name>
    <name type="synonym">KIAA0212</name>
</gene>
<organism>
    <name type="scientific">Homo sapiens</name>
    <name type="common">Human</name>
    <dbReference type="NCBI Taxonomy" id="9606"/>
    <lineage>
        <taxon>Eukaryota</taxon>
        <taxon>Metazoa</taxon>
        <taxon>Chordata</taxon>
        <taxon>Craniata</taxon>
        <taxon>Vertebrata</taxon>
        <taxon>Euteleostomi</taxon>
        <taxon>Mammalia</taxon>
        <taxon>Eutheria</taxon>
        <taxon>Euarchontoglires</taxon>
        <taxon>Primates</taxon>
        <taxon>Haplorrhini</taxon>
        <taxon>Catarrhini</taxon>
        <taxon>Hominidae</taxon>
        <taxon>Homo</taxon>
    </lineage>
</organism>
<reference key="1">
    <citation type="journal article" date="1996" name="DNA Res.">
        <title>Prediction of the coding sequences of unidentified human genes. VI. The coding sequences of 80 new genes (KIAA0201-KIAA0280) deduced by analysis of cDNA clones from cell line KG-1 and brain.</title>
        <authorList>
            <person name="Nagase T."/>
            <person name="Seki N."/>
            <person name="Ishikawa K."/>
            <person name="Ohira M."/>
            <person name="Kawarabayasi Y."/>
            <person name="Ohara O."/>
            <person name="Tanaka A."/>
            <person name="Kotani H."/>
            <person name="Miyajima N."/>
            <person name="Nomura N."/>
        </authorList>
    </citation>
    <scope>NUCLEOTIDE SEQUENCE [LARGE SCALE MRNA] (ISOFORM 1)</scope>
    <source>
        <tissue>Bone marrow</tissue>
    </source>
</reference>
<reference key="2">
    <citation type="journal article" date="2004" name="Nat. Genet.">
        <title>Complete sequencing and characterization of 21,243 full-length human cDNAs.</title>
        <authorList>
            <person name="Ota T."/>
            <person name="Suzuki Y."/>
            <person name="Nishikawa T."/>
            <person name="Otsuki T."/>
            <person name="Sugiyama T."/>
            <person name="Irie R."/>
            <person name="Wakamatsu A."/>
            <person name="Hayashi K."/>
            <person name="Sato H."/>
            <person name="Nagai K."/>
            <person name="Kimura K."/>
            <person name="Makita H."/>
            <person name="Sekine M."/>
            <person name="Obayashi M."/>
            <person name="Nishi T."/>
            <person name="Shibahara T."/>
            <person name="Tanaka T."/>
            <person name="Ishii S."/>
            <person name="Yamamoto J."/>
            <person name="Saito K."/>
            <person name="Kawai Y."/>
            <person name="Isono Y."/>
            <person name="Nakamura Y."/>
            <person name="Nagahari K."/>
            <person name="Murakami K."/>
            <person name="Yasuda T."/>
            <person name="Iwayanagi T."/>
            <person name="Wagatsuma M."/>
            <person name="Shiratori A."/>
            <person name="Sudo H."/>
            <person name="Hosoiri T."/>
            <person name="Kaku Y."/>
            <person name="Kodaira H."/>
            <person name="Kondo H."/>
            <person name="Sugawara M."/>
            <person name="Takahashi M."/>
            <person name="Kanda K."/>
            <person name="Yokoi T."/>
            <person name="Furuya T."/>
            <person name="Kikkawa E."/>
            <person name="Omura Y."/>
            <person name="Abe K."/>
            <person name="Kamihara K."/>
            <person name="Katsuta N."/>
            <person name="Sato K."/>
            <person name="Tanikawa M."/>
            <person name="Yamazaki M."/>
            <person name="Ninomiya K."/>
            <person name="Ishibashi T."/>
            <person name="Yamashita H."/>
            <person name="Murakawa K."/>
            <person name="Fujimori K."/>
            <person name="Tanai H."/>
            <person name="Kimata M."/>
            <person name="Watanabe M."/>
            <person name="Hiraoka S."/>
            <person name="Chiba Y."/>
            <person name="Ishida S."/>
            <person name="Ono Y."/>
            <person name="Takiguchi S."/>
            <person name="Watanabe S."/>
            <person name="Yosida M."/>
            <person name="Hotuta T."/>
            <person name="Kusano J."/>
            <person name="Kanehori K."/>
            <person name="Takahashi-Fujii A."/>
            <person name="Hara H."/>
            <person name="Tanase T.-O."/>
            <person name="Nomura Y."/>
            <person name="Togiya S."/>
            <person name="Komai F."/>
            <person name="Hara R."/>
            <person name="Takeuchi K."/>
            <person name="Arita M."/>
            <person name="Imose N."/>
            <person name="Musashino K."/>
            <person name="Yuuki H."/>
            <person name="Oshima A."/>
            <person name="Sasaki N."/>
            <person name="Aotsuka S."/>
            <person name="Yoshikawa Y."/>
            <person name="Matsunawa H."/>
            <person name="Ichihara T."/>
            <person name="Shiohata N."/>
            <person name="Sano S."/>
            <person name="Moriya S."/>
            <person name="Momiyama H."/>
            <person name="Satoh N."/>
            <person name="Takami S."/>
            <person name="Terashima Y."/>
            <person name="Suzuki O."/>
            <person name="Nakagawa S."/>
            <person name="Senoh A."/>
            <person name="Mizoguchi H."/>
            <person name="Goto Y."/>
            <person name="Shimizu F."/>
            <person name="Wakebe H."/>
            <person name="Hishigaki H."/>
            <person name="Watanabe T."/>
            <person name="Sugiyama A."/>
            <person name="Takemoto M."/>
            <person name="Kawakami B."/>
            <person name="Yamazaki M."/>
            <person name="Watanabe K."/>
            <person name="Kumagai A."/>
            <person name="Itakura S."/>
            <person name="Fukuzumi Y."/>
            <person name="Fujimori Y."/>
            <person name="Komiyama M."/>
            <person name="Tashiro H."/>
            <person name="Tanigami A."/>
            <person name="Fujiwara T."/>
            <person name="Ono T."/>
            <person name="Yamada K."/>
            <person name="Fujii Y."/>
            <person name="Ozaki K."/>
            <person name="Hirao M."/>
            <person name="Ohmori Y."/>
            <person name="Kawabata A."/>
            <person name="Hikiji T."/>
            <person name="Kobatake N."/>
            <person name="Inagaki H."/>
            <person name="Ikema Y."/>
            <person name="Okamoto S."/>
            <person name="Okitani R."/>
            <person name="Kawakami T."/>
            <person name="Noguchi S."/>
            <person name="Itoh T."/>
            <person name="Shigeta K."/>
            <person name="Senba T."/>
            <person name="Matsumura K."/>
            <person name="Nakajima Y."/>
            <person name="Mizuno T."/>
            <person name="Morinaga M."/>
            <person name="Sasaki M."/>
            <person name="Togashi T."/>
            <person name="Oyama M."/>
            <person name="Hata H."/>
            <person name="Watanabe M."/>
            <person name="Komatsu T."/>
            <person name="Mizushima-Sugano J."/>
            <person name="Satoh T."/>
            <person name="Shirai Y."/>
            <person name="Takahashi Y."/>
            <person name="Nakagawa K."/>
            <person name="Okumura K."/>
            <person name="Nagase T."/>
            <person name="Nomura N."/>
            <person name="Kikuchi H."/>
            <person name="Masuho Y."/>
            <person name="Yamashita R."/>
            <person name="Nakai K."/>
            <person name="Yada T."/>
            <person name="Nakamura Y."/>
            <person name="Ohara O."/>
            <person name="Isogai T."/>
            <person name="Sugano S."/>
        </authorList>
    </citation>
    <scope>NUCLEOTIDE SEQUENCE [LARGE SCALE MRNA] (ISOFORMS 1 AND 2)</scope>
    <source>
        <tissue>Testis</tissue>
        <tissue>Thymus</tissue>
    </source>
</reference>
<reference key="3">
    <citation type="journal article" date="2006" name="Nature">
        <title>The DNA sequence, annotation and analysis of human chromosome 3.</title>
        <authorList>
            <person name="Muzny D.M."/>
            <person name="Scherer S.E."/>
            <person name="Kaul R."/>
            <person name="Wang J."/>
            <person name="Yu J."/>
            <person name="Sudbrak R."/>
            <person name="Buhay C.J."/>
            <person name="Chen R."/>
            <person name="Cree A."/>
            <person name="Ding Y."/>
            <person name="Dugan-Rocha S."/>
            <person name="Gill R."/>
            <person name="Gunaratne P."/>
            <person name="Harris R.A."/>
            <person name="Hawes A.C."/>
            <person name="Hernandez J."/>
            <person name="Hodgson A.V."/>
            <person name="Hume J."/>
            <person name="Jackson A."/>
            <person name="Khan Z.M."/>
            <person name="Kovar-Smith C."/>
            <person name="Lewis L.R."/>
            <person name="Lozado R.J."/>
            <person name="Metzker M.L."/>
            <person name="Milosavljevic A."/>
            <person name="Miner G.R."/>
            <person name="Morgan M.B."/>
            <person name="Nazareth L.V."/>
            <person name="Scott G."/>
            <person name="Sodergren E."/>
            <person name="Song X.-Z."/>
            <person name="Steffen D."/>
            <person name="Wei S."/>
            <person name="Wheeler D.A."/>
            <person name="Wright M.W."/>
            <person name="Worley K.C."/>
            <person name="Yuan Y."/>
            <person name="Zhang Z."/>
            <person name="Adams C.Q."/>
            <person name="Ansari-Lari M.A."/>
            <person name="Ayele M."/>
            <person name="Brown M.J."/>
            <person name="Chen G."/>
            <person name="Chen Z."/>
            <person name="Clendenning J."/>
            <person name="Clerc-Blankenburg K.P."/>
            <person name="Chen R."/>
            <person name="Chen Z."/>
            <person name="Davis C."/>
            <person name="Delgado O."/>
            <person name="Dinh H.H."/>
            <person name="Dong W."/>
            <person name="Draper H."/>
            <person name="Ernst S."/>
            <person name="Fu G."/>
            <person name="Gonzalez-Garay M.L."/>
            <person name="Garcia D.K."/>
            <person name="Gillett W."/>
            <person name="Gu J."/>
            <person name="Hao B."/>
            <person name="Haugen E."/>
            <person name="Havlak P."/>
            <person name="He X."/>
            <person name="Hennig S."/>
            <person name="Hu S."/>
            <person name="Huang W."/>
            <person name="Jackson L.R."/>
            <person name="Jacob L.S."/>
            <person name="Kelly S.H."/>
            <person name="Kube M."/>
            <person name="Levy R."/>
            <person name="Li Z."/>
            <person name="Liu B."/>
            <person name="Liu J."/>
            <person name="Liu W."/>
            <person name="Lu J."/>
            <person name="Maheshwari M."/>
            <person name="Nguyen B.-V."/>
            <person name="Okwuonu G.O."/>
            <person name="Palmeiri A."/>
            <person name="Pasternak S."/>
            <person name="Perez L.M."/>
            <person name="Phelps K.A."/>
            <person name="Plopper F.J."/>
            <person name="Qiang B."/>
            <person name="Raymond C."/>
            <person name="Rodriguez R."/>
            <person name="Saenphimmachak C."/>
            <person name="Santibanez J."/>
            <person name="Shen H."/>
            <person name="Shen Y."/>
            <person name="Subramanian S."/>
            <person name="Tabor P.E."/>
            <person name="Verduzco D."/>
            <person name="Waldron L."/>
            <person name="Wang J."/>
            <person name="Wang J."/>
            <person name="Wang Q."/>
            <person name="Williams G.A."/>
            <person name="Wong G.K.-S."/>
            <person name="Yao Z."/>
            <person name="Zhang J."/>
            <person name="Zhang X."/>
            <person name="Zhao G."/>
            <person name="Zhou J."/>
            <person name="Zhou Y."/>
            <person name="Nelson D."/>
            <person name="Lehrach H."/>
            <person name="Reinhardt R."/>
            <person name="Naylor S.L."/>
            <person name="Yang H."/>
            <person name="Olson M."/>
            <person name="Weinstock G."/>
            <person name="Gibbs R.A."/>
        </authorList>
    </citation>
    <scope>NUCLEOTIDE SEQUENCE [LARGE SCALE GENOMIC DNA]</scope>
</reference>
<reference key="4">
    <citation type="submission" date="2005-07" db="EMBL/GenBank/DDBJ databases">
        <authorList>
            <person name="Mural R.J."/>
            <person name="Istrail S."/>
            <person name="Sutton G.G."/>
            <person name="Florea L."/>
            <person name="Halpern A.L."/>
            <person name="Mobarry C.M."/>
            <person name="Lippert R."/>
            <person name="Walenz B."/>
            <person name="Shatkay H."/>
            <person name="Dew I."/>
            <person name="Miller J.R."/>
            <person name="Flanigan M.J."/>
            <person name="Edwards N.J."/>
            <person name="Bolanos R."/>
            <person name="Fasulo D."/>
            <person name="Halldorsson B.V."/>
            <person name="Hannenhalli S."/>
            <person name="Turner R."/>
            <person name="Yooseph S."/>
            <person name="Lu F."/>
            <person name="Nusskern D.R."/>
            <person name="Shue B.C."/>
            <person name="Zheng X.H."/>
            <person name="Zhong F."/>
            <person name="Delcher A.L."/>
            <person name="Huson D.H."/>
            <person name="Kravitz S.A."/>
            <person name="Mouchard L."/>
            <person name="Reinert K."/>
            <person name="Remington K.A."/>
            <person name="Clark A.G."/>
            <person name="Waterman M.S."/>
            <person name="Eichler E.E."/>
            <person name="Adams M.D."/>
            <person name="Hunkapiller M.W."/>
            <person name="Myers E.W."/>
            <person name="Venter J.C."/>
        </authorList>
    </citation>
    <scope>NUCLEOTIDE SEQUENCE [LARGE SCALE GENOMIC DNA]</scope>
</reference>
<reference key="5">
    <citation type="journal article" date="2004" name="Genome Res.">
        <title>The status, quality, and expansion of the NIH full-length cDNA project: the Mammalian Gene Collection (MGC).</title>
        <authorList>
            <consortium name="The MGC Project Team"/>
        </authorList>
    </citation>
    <scope>NUCLEOTIDE SEQUENCE [LARGE SCALE MRNA] (ISOFORM 1)</scope>
    <source>
        <tissue>Skin</tissue>
    </source>
</reference>
<reference key="6">
    <citation type="journal article" date="2003" name="Science">
        <title>Role of EDEM in the release of misfolded glycoproteins from the calnexin cycle.</title>
        <authorList>
            <person name="Molinari M."/>
            <person name="Calanca V."/>
            <person name="Galli C."/>
            <person name="Lucca P."/>
            <person name="Paganetti P."/>
        </authorList>
    </citation>
    <scope>FUNCTION</scope>
</reference>
<reference key="7">
    <citation type="journal article" date="2006" name="J. Cell Biol.">
        <title>Derlin-2 and Derlin-3 are regulated by the mammalian unfolded protein response and are required for ER-associated degradation.</title>
        <authorList>
            <person name="Oda Y."/>
            <person name="Okada T."/>
            <person name="Yoshida H."/>
            <person name="Kaufman R.J."/>
            <person name="Nagata K."/>
            <person name="Mori K."/>
        </authorList>
    </citation>
    <scope>INTERACTION WITH DERL2 AND DERL3</scope>
</reference>
<reference key="8">
    <citation type="journal article" date="2009" name="J. Cell Sci.">
        <title>A dual role for EDEM1 in the processing of rod opsin.</title>
        <authorList>
            <person name="Kosmaoglou M."/>
            <person name="Kanuga N."/>
            <person name="Aguila M."/>
            <person name="Garriga P."/>
            <person name="Cheetham M.E."/>
        </authorList>
    </citation>
    <scope>FUNCTION</scope>
    <scope>SUBCELLULAR LOCATION</scope>
</reference>
<reference key="9">
    <citation type="journal article" date="2009" name="Mol. Cell">
        <title>EDEM1 recognition and delivery of misfolded proteins to the SEL1L-containing ERAD complex.</title>
        <authorList>
            <person name="Cormier J.H."/>
            <person name="Tamura T."/>
            <person name="Sunryd J.C."/>
            <person name="Hebert D.N."/>
        </authorList>
    </citation>
    <scope>FUNCTION</scope>
    <scope>MUTAGENESIS OF GLU-225; ASP-370 AND GLU-493</scope>
    <scope>INTERACTION WITH SEL1L</scope>
</reference>
<reference key="10">
    <citation type="journal article" date="2014" name="J. Cell Biol.">
        <title>EDEM2 initiates mammalian glycoprotein ERAD by catalyzing the first mannose trimming step.</title>
        <authorList>
            <person name="Ninagawa S."/>
            <person name="Okada T."/>
            <person name="Sumitomo Y."/>
            <person name="Kamiya Y."/>
            <person name="Kato K."/>
            <person name="Horimoto S."/>
            <person name="Ishikawa T."/>
            <person name="Takeda S."/>
            <person name="Sakuma T."/>
            <person name="Yamamoto T."/>
            <person name="Mori K."/>
        </authorList>
    </citation>
    <scope>FUNCTION</scope>
</reference>
<evidence type="ECO:0000250" key="1"/>
<evidence type="ECO:0000255" key="2"/>
<evidence type="ECO:0000256" key="3">
    <source>
        <dbReference type="SAM" id="MobiDB-lite"/>
    </source>
</evidence>
<evidence type="ECO:0000269" key="4">
    <source>
    </source>
</evidence>
<evidence type="ECO:0000269" key="5">
    <source>
    </source>
</evidence>
<evidence type="ECO:0000269" key="6">
    <source>
    </source>
</evidence>
<evidence type="ECO:0000269" key="7">
    <source>
    </source>
</evidence>
<evidence type="ECO:0000269" key="8">
    <source>
    </source>
</evidence>
<evidence type="ECO:0000303" key="9">
    <source>
    </source>
</evidence>
<evidence type="ECO:0000305" key="10"/>
<proteinExistence type="evidence at protein level"/>
<feature type="chain" id="PRO_0000210321" description="ER degradation-enhancing alpha-mannosidase-like protein 1">
    <location>
        <begin position="1"/>
        <end position="657"/>
    </location>
</feature>
<feature type="topological domain" description="Cytoplasmic" evidence="2">
    <location>
        <begin position="1"/>
        <end position="4"/>
    </location>
</feature>
<feature type="transmembrane region" description="Helical; Signal-anchor for type II membrane protein" evidence="2">
    <location>
        <begin position="5"/>
        <end position="25"/>
    </location>
</feature>
<feature type="topological domain" description="Lumenal" evidence="2">
    <location>
        <begin position="26"/>
        <end position="657"/>
    </location>
</feature>
<feature type="region of interest" description="Disordered" evidence="3">
    <location>
        <begin position="48"/>
        <end position="94"/>
    </location>
</feature>
<feature type="glycosylation site" description="N-linked (GlcNAc...) asparagine" evidence="2">
    <location>
        <position position="181"/>
    </location>
</feature>
<feature type="glycosylation site" description="N-linked (GlcNAc...) asparagine" evidence="2">
    <location>
        <position position="198"/>
    </location>
</feature>
<feature type="glycosylation site" description="N-linked (GlcNAc...) asparagine" evidence="2">
    <location>
        <position position="299"/>
    </location>
</feature>
<feature type="glycosylation site" description="N-linked (GlcNAc...) asparagine" evidence="2">
    <location>
        <position position="342"/>
    </location>
</feature>
<feature type="glycosylation site" description="N-linked (GlcNAc...) asparagine" evidence="2">
    <location>
        <position position="624"/>
    </location>
</feature>
<feature type="splice variant" id="VSP_056703" description="In isoform 2." evidence="9">
    <location>
        <begin position="1"/>
        <end position="195"/>
    </location>
</feature>
<feature type="splice variant" id="VSP_056704" description="In isoform 2." evidence="9">
    <original>LFDEDNPVHKSGTRYMFTTEGHIVSVDEHLRELPWKEFFSEEGGQDQGGKSVHRPKPHELKVINSSSNCNRVPDERRYSLPLKSIYMRQIDQMVGLI</original>
    <variation>VCVLQDEPRNI</variation>
    <location>
        <begin position="561"/>
        <end position="657"/>
    </location>
</feature>
<feature type="mutagenesis site" description="Normal affinity for misfolded glycoproteins, but impaired SEL1L binding." evidence="6">
    <original>E</original>
    <variation>Q</variation>
    <location>
        <position position="225"/>
    </location>
</feature>
<feature type="mutagenesis site" description="Normal affinity for misfolded glycoproteins, but impaired SEL1L binding." evidence="6">
    <original>D</original>
    <variation>N</variation>
    <location>
        <position position="370"/>
    </location>
</feature>
<feature type="mutagenesis site" description="Normal affinity for misfolded glycoproteins, but impaired SEL1L binding." evidence="6">
    <original>E</original>
    <variation>Q</variation>
    <location>
        <position position="493"/>
    </location>
</feature>
<protein>
    <recommendedName>
        <fullName>ER degradation-enhancing alpha-mannosidase-like protein 1</fullName>
    </recommendedName>
</protein>
<comment type="function">
    <text evidence="4 6 7 8">Extracts misfolded glycoproteins, but not glycoproteins undergoing productive folding, from the calnexin cycle. It is directly involved in endoplasmic reticulum-associated degradation (ERAD) and targets misfolded glycoproteins for degradation in an N-glycan-independent manner, probably by forming a complex with SEL1L. It has low mannosidase activity, catalyzing mannose trimming from Man8GlcNAc2 to Man7GlcNAc2.</text>
</comment>
<comment type="subunit">
    <text evidence="1 5 6">Interacts with DNAJC10 (By similarity). Interacts with DERL2 and DERL3. Binds to SEL1L.</text>
</comment>
<comment type="subcellular location">
    <subcellularLocation>
        <location evidence="7">Endoplasmic reticulum membrane</location>
        <topology evidence="7">Single-pass type II membrane protein</topology>
    </subcellularLocation>
</comment>
<comment type="alternative products">
    <event type="alternative splicing"/>
    <isoform>
        <id>Q92611-1</id>
        <name>1</name>
        <sequence type="displayed"/>
    </isoform>
    <isoform>
        <id>Q92611-2</id>
        <name>2</name>
        <sequence type="described" ref="VSP_056703 VSP_056704"/>
    </isoform>
</comment>
<comment type="similarity">
    <text evidence="10">Belongs to the glycosyl hydrolase 47 family.</text>
</comment>
<comment type="sequence caution" evidence="10">
    <conflict type="erroneous initiation">
        <sequence resource="EMBL-CDS" id="BAA13203"/>
    </conflict>
</comment>
<keyword id="KW-0025">Alternative splicing</keyword>
<keyword id="KW-0256">Endoplasmic reticulum</keyword>
<keyword id="KW-0325">Glycoprotein</keyword>
<keyword id="KW-0472">Membrane</keyword>
<keyword id="KW-1267">Proteomics identification</keyword>
<keyword id="KW-1185">Reference proteome</keyword>
<keyword id="KW-0735">Signal-anchor</keyword>
<keyword id="KW-0812">Transmembrane</keyword>
<keyword id="KW-1133">Transmembrane helix</keyword>
<keyword id="KW-0834">Unfolded protein response</keyword>
<dbReference type="EMBL" id="D86967">
    <property type="protein sequence ID" value="BAA13203.2"/>
    <property type="status" value="ALT_INIT"/>
    <property type="molecule type" value="mRNA"/>
</dbReference>
<dbReference type="EMBL" id="AK292643">
    <property type="protein sequence ID" value="BAF85332.1"/>
    <property type="molecule type" value="mRNA"/>
</dbReference>
<dbReference type="EMBL" id="AK302065">
    <property type="protein sequence ID" value="BAG63455.1"/>
    <property type="molecule type" value="mRNA"/>
</dbReference>
<dbReference type="EMBL" id="AC026202">
    <property type="status" value="NOT_ANNOTATED_CDS"/>
    <property type="molecule type" value="Genomic_DNA"/>
</dbReference>
<dbReference type="EMBL" id="CH471055">
    <property type="protein sequence ID" value="EAW63925.1"/>
    <property type="molecule type" value="Genomic_DNA"/>
</dbReference>
<dbReference type="EMBL" id="BC019088">
    <property type="protein sequence ID" value="AAH19088.1"/>
    <property type="molecule type" value="mRNA"/>
</dbReference>
<dbReference type="CCDS" id="CCDS33686.1">
    <molecule id="Q92611-1"/>
</dbReference>
<dbReference type="RefSeq" id="NP_055489.1">
    <molecule id="Q92611-1"/>
    <property type="nucleotide sequence ID" value="NM_014674.3"/>
</dbReference>
<dbReference type="SMR" id="Q92611"/>
<dbReference type="BioGRID" id="115047">
    <property type="interactions" value="215"/>
</dbReference>
<dbReference type="FunCoup" id="Q92611">
    <property type="interactions" value="888"/>
</dbReference>
<dbReference type="IntAct" id="Q92611">
    <property type="interactions" value="40"/>
</dbReference>
<dbReference type="MINT" id="Q92611"/>
<dbReference type="STRING" id="9606.ENSP00000256497"/>
<dbReference type="CAZy" id="GH47">
    <property type="family name" value="Glycoside Hydrolase Family 47"/>
</dbReference>
<dbReference type="GlyCosmos" id="Q92611">
    <property type="glycosylation" value="5 sites, No reported glycans"/>
</dbReference>
<dbReference type="GlyGen" id="Q92611">
    <property type="glycosylation" value="8 sites, 7 N-linked glycans (2 sites)"/>
</dbReference>
<dbReference type="iPTMnet" id="Q92611"/>
<dbReference type="PhosphoSitePlus" id="Q92611"/>
<dbReference type="BioMuta" id="EDEM1"/>
<dbReference type="DMDM" id="17368550"/>
<dbReference type="jPOST" id="Q92611"/>
<dbReference type="MassIVE" id="Q92611"/>
<dbReference type="PaxDb" id="9606-ENSP00000256497"/>
<dbReference type="PeptideAtlas" id="Q92611"/>
<dbReference type="ProteomicsDB" id="5457"/>
<dbReference type="ProteomicsDB" id="75356">
    <molecule id="Q92611-1"/>
</dbReference>
<dbReference type="Pumba" id="Q92611"/>
<dbReference type="Antibodypedia" id="25261">
    <property type="antibodies" value="97 antibodies from 27 providers"/>
</dbReference>
<dbReference type="DNASU" id="9695"/>
<dbReference type="Ensembl" id="ENST00000256497.9">
    <molecule id="Q92611-1"/>
    <property type="protein sequence ID" value="ENSP00000256497.4"/>
    <property type="gene ID" value="ENSG00000134109.11"/>
</dbReference>
<dbReference type="Ensembl" id="ENST00000445686.1">
    <molecule id="Q92611-2"/>
    <property type="protein sequence ID" value="ENSP00000394099.1"/>
    <property type="gene ID" value="ENSG00000134109.11"/>
</dbReference>
<dbReference type="GeneID" id="9695"/>
<dbReference type="KEGG" id="hsa:9695"/>
<dbReference type="MANE-Select" id="ENST00000256497.9">
    <property type="protein sequence ID" value="ENSP00000256497.4"/>
    <property type="RefSeq nucleotide sequence ID" value="NM_014674.3"/>
    <property type="RefSeq protein sequence ID" value="NP_055489.1"/>
</dbReference>
<dbReference type="UCSC" id="uc003bqi.4">
    <molecule id="Q92611-1"/>
    <property type="organism name" value="human"/>
</dbReference>
<dbReference type="AGR" id="HGNC:18967"/>
<dbReference type="CTD" id="9695"/>
<dbReference type="DisGeNET" id="9695"/>
<dbReference type="GeneCards" id="EDEM1"/>
<dbReference type="HGNC" id="HGNC:18967">
    <property type="gene designation" value="EDEM1"/>
</dbReference>
<dbReference type="HPA" id="ENSG00000134109">
    <property type="expression patterns" value="Tissue enhanced (lymphoid)"/>
</dbReference>
<dbReference type="MIM" id="607673">
    <property type="type" value="gene"/>
</dbReference>
<dbReference type="neXtProt" id="NX_Q92611"/>
<dbReference type="OpenTargets" id="ENSG00000134109"/>
<dbReference type="PharmGKB" id="PA128394554"/>
<dbReference type="VEuPathDB" id="HostDB:ENSG00000134109"/>
<dbReference type="eggNOG" id="KOG2429">
    <property type="taxonomic scope" value="Eukaryota"/>
</dbReference>
<dbReference type="GeneTree" id="ENSGT00940000157717"/>
<dbReference type="HOGENOM" id="CLU_003818_5_6_1"/>
<dbReference type="InParanoid" id="Q92611"/>
<dbReference type="OMA" id="EEFWRMF"/>
<dbReference type="OrthoDB" id="8118055at2759"/>
<dbReference type="PAN-GO" id="Q92611">
    <property type="GO annotations" value="3 GO annotations based on evolutionary models"/>
</dbReference>
<dbReference type="PhylomeDB" id="Q92611"/>
<dbReference type="TreeFam" id="TF300807"/>
<dbReference type="PathwayCommons" id="Q92611"/>
<dbReference type="Reactome" id="R-HSA-381038">
    <property type="pathway name" value="XBP1(S) activates chaperone genes"/>
</dbReference>
<dbReference type="Reactome" id="R-HSA-901032">
    <property type="pathway name" value="ER Quality Control Compartment (ERQC)"/>
</dbReference>
<dbReference type="SignaLink" id="Q92611"/>
<dbReference type="BioGRID-ORCS" id="9695">
    <property type="hits" value="15 hits in 1159 CRISPR screens"/>
</dbReference>
<dbReference type="ChiTaRS" id="EDEM1">
    <property type="organism name" value="human"/>
</dbReference>
<dbReference type="GeneWiki" id="EDEM1"/>
<dbReference type="GenomeRNAi" id="9695"/>
<dbReference type="Pharos" id="Q92611">
    <property type="development level" value="Tbio"/>
</dbReference>
<dbReference type="PRO" id="PR:Q92611"/>
<dbReference type="Proteomes" id="UP000005640">
    <property type="component" value="Chromosome 3"/>
</dbReference>
<dbReference type="RNAct" id="Q92611">
    <property type="molecule type" value="protein"/>
</dbReference>
<dbReference type="Bgee" id="ENSG00000134109">
    <property type="expression patterns" value="Expressed in bone marrow cell and 179 other cell types or tissues"/>
</dbReference>
<dbReference type="ExpressionAtlas" id="Q92611">
    <property type="expression patterns" value="baseline and differential"/>
</dbReference>
<dbReference type="GO" id="GO:0016235">
    <property type="term" value="C:aggresome"/>
    <property type="evidence" value="ECO:0000314"/>
    <property type="project" value="HPA"/>
</dbReference>
<dbReference type="GO" id="GO:0005783">
    <property type="term" value="C:endoplasmic reticulum"/>
    <property type="evidence" value="ECO:0000314"/>
    <property type="project" value="MGI"/>
</dbReference>
<dbReference type="GO" id="GO:0005789">
    <property type="term" value="C:endoplasmic reticulum membrane"/>
    <property type="evidence" value="ECO:0000250"/>
    <property type="project" value="UniProtKB"/>
</dbReference>
<dbReference type="GO" id="GO:0044322">
    <property type="term" value="C:endoplasmic reticulum quality control compartment"/>
    <property type="evidence" value="ECO:0000314"/>
    <property type="project" value="UniProtKB"/>
</dbReference>
<dbReference type="GO" id="GO:0005509">
    <property type="term" value="F:calcium ion binding"/>
    <property type="evidence" value="ECO:0007669"/>
    <property type="project" value="InterPro"/>
</dbReference>
<dbReference type="GO" id="GO:0004571">
    <property type="term" value="F:mannosyl-oligosaccharide 1,2-alpha-mannosidase activity"/>
    <property type="evidence" value="ECO:0000315"/>
    <property type="project" value="ParkinsonsUK-UCL"/>
</dbReference>
<dbReference type="GO" id="GO:0051787">
    <property type="term" value="F:misfolded protein binding"/>
    <property type="evidence" value="ECO:0000314"/>
    <property type="project" value="UniProtKB"/>
</dbReference>
<dbReference type="GO" id="GO:0005975">
    <property type="term" value="P:carbohydrate metabolic process"/>
    <property type="evidence" value="ECO:0007669"/>
    <property type="project" value="InterPro"/>
</dbReference>
<dbReference type="GO" id="GO:1904380">
    <property type="term" value="P:endoplasmic reticulum mannose trimming"/>
    <property type="evidence" value="ECO:0007669"/>
    <property type="project" value="InterPro"/>
</dbReference>
<dbReference type="GO" id="GO:0036503">
    <property type="term" value="P:ERAD pathway"/>
    <property type="evidence" value="ECO:0000315"/>
    <property type="project" value="ParkinsonsUK-UCL"/>
</dbReference>
<dbReference type="GO" id="GO:0006058">
    <property type="term" value="P:mannoprotein catabolic process"/>
    <property type="evidence" value="ECO:0000315"/>
    <property type="project" value="ParkinsonsUK-UCL"/>
</dbReference>
<dbReference type="GO" id="GO:1904154">
    <property type="term" value="P:positive regulation of retrograde protein transport, ER to cytosol"/>
    <property type="evidence" value="ECO:0000315"/>
    <property type="project" value="ParkinsonsUK-UCL"/>
</dbReference>
<dbReference type="GO" id="GO:0045047">
    <property type="term" value="P:protein targeting to ER"/>
    <property type="evidence" value="ECO:0000315"/>
    <property type="project" value="UniProtKB"/>
</dbReference>
<dbReference type="GO" id="GO:0006986">
    <property type="term" value="P:response to unfolded protein"/>
    <property type="evidence" value="ECO:0007669"/>
    <property type="project" value="UniProtKB-KW"/>
</dbReference>
<dbReference type="GO" id="GO:0006511">
    <property type="term" value="P:ubiquitin-dependent protein catabolic process"/>
    <property type="evidence" value="ECO:0000315"/>
    <property type="project" value="ParkinsonsUK-UCL"/>
</dbReference>
<dbReference type="FunFam" id="1.50.10.10:FF:000016">
    <property type="entry name" value="alpha-1,2-Mannosidase"/>
    <property type="match status" value="1"/>
</dbReference>
<dbReference type="Gene3D" id="1.50.10.10">
    <property type="match status" value="1"/>
</dbReference>
<dbReference type="InterPro" id="IPR012341">
    <property type="entry name" value="6hp_glycosidase-like_sf"/>
</dbReference>
<dbReference type="InterPro" id="IPR044674">
    <property type="entry name" value="EDEM1/2/3"/>
</dbReference>
<dbReference type="InterPro" id="IPR001382">
    <property type="entry name" value="Glyco_hydro_47"/>
</dbReference>
<dbReference type="InterPro" id="IPR036026">
    <property type="entry name" value="Seven-hairpin_glycosidases"/>
</dbReference>
<dbReference type="PANTHER" id="PTHR45679:SF5">
    <property type="entry name" value="ER DEGRADATION-ENHANCING ALPHA-MANNOSIDASE-LIKE PROTEIN 1"/>
    <property type="match status" value="1"/>
</dbReference>
<dbReference type="PANTHER" id="PTHR45679">
    <property type="entry name" value="ER DEGRADATION-ENHANCING ALPHA-MANNOSIDASE-LIKE PROTEIN 2"/>
    <property type="match status" value="1"/>
</dbReference>
<dbReference type="Pfam" id="PF01532">
    <property type="entry name" value="Glyco_hydro_47"/>
    <property type="match status" value="1"/>
</dbReference>
<dbReference type="PRINTS" id="PR00747">
    <property type="entry name" value="GLYHDRLASE47"/>
</dbReference>
<dbReference type="SUPFAM" id="SSF48225">
    <property type="entry name" value="Seven-hairpin glycosidases"/>
    <property type="match status" value="1"/>
</dbReference>
<accession>Q92611</accession>
<accession>A8K9C8</accession>
<accession>B4DXP3</accession>
<sequence length="657" mass="73768">MQWRALVLGLVLLRLGLHGVLWLVFGLGPSMGFYQRFPLSFGFQRLRSPDGPASPTSGPVGRPGGVSGPSWLQPPGTGAAQSPRKAPRRPGPGMCGPANWGYVLGGRGRGPDEYEKRYSGAFPPQLRAQMRDLARGMFVFGYDNYMAHAFPQDELNPIHCRGRGPDRGDPSNLNINDVLGNYSLTLVDALDTLAIMGNSSEFQKAVKLVINTVSFDKDSTVQVFEATIRVLGSLLSAHRIITDSKQPFGDMTIKDYDNELLYMAHDLAVRLLPAFENTKTGIPYPRVNLKTGVPPDTNNETCTAGAGSLLVEFGILSRLLGDSTFEWVARRAVKALWNLRSNDTGLLGNVVNIQTGHWVGKQSGLGAGLDSFYEYLLKSYILFGEKEDLEMFNAAYQSIQNYLRRGREACNEGEGDPPLYVNVNMFSGQLMNTWIDSLQAFFPGLQVLIGDVEDAICLHAFYYAIWKRYGALPERYNWQLQAPDVLFYPLRPELVESTYLLYQATKNPFYLHVGMDILQSLEKYTKVKCGYATLHHVIDKSTEDRMESFFLSETCKYLYLLFDEDNPVHKSGTRYMFTTEGHIVSVDEHLRELPWKEFFSEEGGQDQGGKSVHRPKPHELKVINSSSNCNRVPDERRYSLPLKSIYMRQIDQMVGLI</sequence>
<name>EDEM1_HUMAN</name>